<keyword id="KW-0002">3D-structure</keyword>
<keyword id="KW-0067">ATP-binding</keyword>
<keyword id="KW-0112">Calmodulin-binding</keyword>
<keyword id="KW-0963">Cytoplasm</keyword>
<keyword id="KW-0903">Direct protein sequencing</keyword>
<keyword id="KW-0418">Kinase</keyword>
<keyword id="KW-0488">Methylation</keyword>
<keyword id="KW-0547">Nucleotide-binding</keyword>
<keyword id="KW-0539">Nucleus</keyword>
<keyword id="KW-0597">Phosphoprotein</keyword>
<keyword id="KW-1185">Reference proteome</keyword>
<keyword id="KW-0723">Serine/threonine-protein kinase</keyword>
<keyword id="KW-0808">Transferase</keyword>
<evidence type="ECO:0000250" key="1">
    <source>
        <dbReference type="UniProtKB" id="Q8N5S9"/>
    </source>
</evidence>
<evidence type="ECO:0000250" key="2">
    <source>
        <dbReference type="UniProtKB" id="Q8VBY2"/>
    </source>
</evidence>
<evidence type="ECO:0000255" key="3">
    <source>
        <dbReference type="PROSITE-ProRule" id="PRU00159"/>
    </source>
</evidence>
<evidence type="ECO:0000255" key="4">
    <source>
        <dbReference type="PROSITE-ProRule" id="PRU10027"/>
    </source>
</evidence>
<evidence type="ECO:0000256" key="5">
    <source>
        <dbReference type="SAM" id="MobiDB-lite"/>
    </source>
</evidence>
<evidence type="ECO:0000269" key="6">
    <source>
    </source>
</evidence>
<evidence type="ECO:0000269" key="7">
    <source>
    </source>
</evidence>
<evidence type="ECO:0000269" key="8">
    <source>
    </source>
</evidence>
<evidence type="ECO:0000269" key="9">
    <source>
    </source>
</evidence>
<evidence type="ECO:0000269" key="10">
    <source>
    </source>
</evidence>
<evidence type="ECO:0000269" key="11">
    <source>
    </source>
</evidence>
<evidence type="ECO:0000269" key="12">
    <source>
    </source>
</evidence>
<evidence type="ECO:0000269" key="13">
    <source>
    </source>
</evidence>
<evidence type="ECO:0000305" key="14"/>
<evidence type="ECO:0007744" key="15">
    <source>
    </source>
</evidence>
<evidence type="ECO:0007829" key="16">
    <source>
        <dbReference type="PDB" id="1CKK"/>
    </source>
</evidence>
<protein>
    <recommendedName>
        <fullName>Calcium/calmodulin-dependent protein kinase kinase 1</fullName>
        <shortName>CaM-KK 1</shortName>
        <shortName>CaM-kinase kinase 1</shortName>
        <shortName>CaMKK 1</shortName>
        <ecNumber>2.7.11.17</ecNumber>
    </recommendedName>
    <alternativeName>
        <fullName>CaM-kinase IV kinase</fullName>
    </alternativeName>
    <alternativeName>
        <fullName>Calcium/calmodulin-dependent protein kinase kinase alpha</fullName>
        <shortName>CaM-KK alpha</shortName>
        <shortName>CaM-kinase kinase alpha</shortName>
        <shortName>CaMKK alpha</shortName>
    </alternativeName>
</protein>
<proteinExistence type="evidence at protein level"/>
<organism>
    <name type="scientific">Rattus norvegicus</name>
    <name type="common">Rat</name>
    <dbReference type="NCBI Taxonomy" id="10116"/>
    <lineage>
        <taxon>Eukaryota</taxon>
        <taxon>Metazoa</taxon>
        <taxon>Chordata</taxon>
        <taxon>Craniata</taxon>
        <taxon>Vertebrata</taxon>
        <taxon>Euteleostomi</taxon>
        <taxon>Mammalia</taxon>
        <taxon>Eutheria</taxon>
        <taxon>Euarchontoglires</taxon>
        <taxon>Glires</taxon>
        <taxon>Rodentia</taxon>
        <taxon>Myomorpha</taxon>
        <taxon>Muroidea</taxon>
        <taxon>Muridae</taxon>
        <taxon>Murinae</taxon>
        <taxon>Rattus</taxon>
    </lineage>
</organism>
<dbReference type="EC" id="2.7.11.17"/>
<dbReference type="EMBL" id="L42810">
    <property type="protein sequence ID" value="AAC42070.1"/>
    <property type="molecule type" value="mRNA"/>
</dbReference>
<dbReference type="EMBL" id="AB023658">
    <property type="protein sequence ID" value="BAA75246.1"/>
    <property type="molecule type" value="mRNA"/>
</dbReference>
<dbReference type="EMBL" id="S83194">
    <property type="protein sequence ID" value="AAB46910.1"/>
    <property type="molecule type" value="mRNA"/>
</dbReference>
<dbReference type="PIR" id="A57156">
    <property type="entry name" value="A57156"/>
</dbReference>
<dbReference type="RefSeq" id="NP_113850.1">
    <property type="nucleotide sequence ID" value="NM_031662.1"/>
</dbReference>
<dbReference type="PDB" id="1CKK">
    <property type="method" value="NMR"/>
    <property type="chains" value="B=438-463"/>
</dbReference>
<dbReference type="PDBsum" id="1CKK"/>
<dbReference type="BMRB" id="P97756"/>
<dbReference type="SMR" id="P97756"/>
<dbReference type="BioGRID" id="248789">
    <property type="interactions" value="3"/>
</dbReference>
<dbReference type="FunCoup" id="P97756">
    <property type="interactions" value="2010"/>
</dbReference>
<dbReference type="IntAct" id="P97756">
    <property type="interactions" value="4"/>
</dbReference>
<dbReference type="MINT" id="P97756"/>
<dbReference type="STRING" id="10116.ENSRNOP00000025009"/>
<dbReference type="iPTMnet" id="P97756"/>
<dbReference type="PhosphoSitePlus" id="P97756"/>
<dbReference type="PaxDb" id="10116-ENSRNOP00000025009"/>
<dbReference type="GeneID" id="60341"/>
<dbReference type="KEGG" id="rno:60341"/>
<dbReference type="AGR" id="RGD:62023"/>
<dbReference type="CTD" id="84254"/>
<dbReference type="RGD" id="62023">
    <property type="gene designation" value="Camkk1"/>
</dbReference>
<dbReference type="eggNOG" id="KOG0585">
    <property type="taxonomic scope" value="Eukaryota"/>
</dbReference>
<dbReference type="InParanoid" id="P97756"/>
<dbReference type="OrthoDB" id="68483at2759"/>
<dbReference type="PhylomeDB" id="P97756"/>
<dbReference type="BRENDA" id="2.7.11.17">
    <property type="organism ID" value="5301"/>
</dbReference>
<dbReference type="Reactome" id="R-RNO-111932">
    <property type="pathway name" value="CaMK IV-mediated phosphorylation of CREB"/>
</dbReference>
<dbReference type="Reactome" id="R-RNO-442729">
    <property type="pathway name" value="CREB1 phosphorylation through the activation of CaMKII/CaMKK/CaMKIV cascasde"/>
</dbReference>
<dbReference type="Reactome" id="R-RNO-9619229">
    <property type="pathway name" value="Activation of RAC1 downstream of NMDARs"/>
</dbReference>
<dbReference type="EvolutionaryTrace" id="P97756"/>
<dbReference type="PRO" id="PR:P97756"/>
<dbReference type="Proteomes" id="UP000002494">
    <property type="component" value="Unplaced"/>
</dbReference>
<dbReference type="GO" id="GO:0005737">
    <property type="term" value="C:cytoplasm"/>
    <property type="evidence" value="ECO:0000318"/>
    <property type="project" value="GO_Central"/>
</dbReference>
<dbReference type="GO" id="GO:0005654">
    <property type="term" value="C:nucleoplasm"/>
    <property type="evidence" value="ECO:0000304"/>
    <property type="project" value="Reactome"/>
</dbReference>
<dbReference type="GO" id="GO:0005524">
    <property type="term" value="F:ATP binding"/>
    <property type="evidence" value="ECO:0007669"/>
    <property type="project" value="UniProtKB-KW"/>
</dbReference>
<dbReference type="GO" id="GO:0004683">
    <property type="term" value="F:calcium/calmodulin-dependent protein kinase activity"/>
    <property type="evidence" value="ECO:0000314"/>
    <property type="project" value="RGD"/>
</dbReference>
<dbReference type="GO" id="GO:0005516">
    <property type="term" value="F:calmodulin binding"/>
    <property type="evidence" value="ECO:0000314"/>
    <property type="project" value="RGD"/>
</dbReference>
<dbReference type="GO" id="GO:0106310">
    <property type="term" value="F:protein serine kinase activity"/>
    <property type="evidence" value="ECO:0007669"/>
    <property type="project" value="RHEA"/>
</dbReference>
<dbReference type="GO" id="GO:0035556">
    <property type="term" value="P:intracellular signal transduction"/>
    <property type="evidence" value="ECO:0000318"/>
    <property type="project" value="GO_Central"/>
</dbReference>
<dbReference type="FunFam" id="3.30.200.20:FF:000429">
    <property type="entry name" value="Calcium/calmodulin-dependent protein kinase kinase"/>
    <property type="match status" value="1"/>
</dbReference>
<dbReference type="FunFam" id="1.10.510.10:FF:000091">
    <property type="entry name" value="Calcium/calmodulin-dependent protein kinase kinase 2 isoform 1"/>
    <property type="match status" value="1"/>
</dbReference>
<dbReference type="Gene3D" id="3.30.200.20">
    <property type="entry name" value="Phosphorylase Kinase, domain 1"/>
    <property type="match status" value="1"/>
</dbReference>
<dbReference type="Gene3D" id="1.10.510.10">
    <property type="entry name" value="Transferase(Phosphotransferase) domain 1"/>
    <property type="match status" value="1"/>
</dbReference>
<dbReference type="IDEAL" id="IID50177"/>
<dbReference type="InterPro" id="IPR011009">
    <property type="entry name" value="Kinase-like_dom_sf"/>
</dbReference>
<dbReference type="InterPro" id="IPR000719">
    <property type="entry name" value="Prot_kinase_dom"/>
</dbReference>
<dbReference type="InterPro" id="IPR017441">
    <property type="entry name" value="Protein_kinase_ATP_BS"/>
</dbReference>
<dbReference type="InterPro" id="IPR008271">
    <property type="entry name" value="Ser/Thr_kinase_AS"/>
</dbReference>
<dbReference type="PANTHER" id="PTHR43895">
    <property type="entry name" value="CALCIUM/CALMODULIN-DEPENDENT PROTEIN KINASE KINASE-RELATED"/>
    <property type="match status" value="1"/>
</dbReference>
<dbReference type="PANTHER" id="PTHR43895:SF26">
    <property type="entry name" value="CALCIUM_CALMODULIN DEPENDENT PROTEIN KINASE KINASE 1"/>
    <property type="match status" value="1"/>
</dbReference>
<dbReference type="Pfam" id="PF00069">
    <property type="entry name" value="Pkinase"/>
    <property type="match status" value="1"/>
</dbReference>
<dbReference type="SMART" id="SM00220">
    <property type="entry name" value="S_TKc"/>
    <property type="match status" value="1"/>
</dbReference>
<dbReference type="SUPFAM" id="SSF56112">
    <property type="entry name" value="Protein kinase-like (PK-like)"/>
    <property type="match status" value="1"/>
</dbReference>
<dbReference type="PROSITE" id="PS00107">
    <property type="entry name" value="PROTEIN_KINASE_ATP"/>
    <property type="match status" value="1"/>
</dbReference>
<dbReference type="PROSITE" id="PS50011">
    <property type="entry name" value="PROTEIN_KINASE_DOM"/>
    <property type="match status" value="1"/>
</dbReference>
<dbReference type="PROSITE" id="PS00108">
    <property type="entry name" value="PROTEIN_KINASE_ST"/>
    <property type="match status" value="1"/>
</dbReference>
<reference key="1">
    <citation type="journal article" date="1995" name="J. Biol. Chem.">
        <title>Characterization of a Ca2+/calmodulin-dependent protein kinase cascade. Molecular cloning and expression of calcium/calmodulin-dependent protein kinase kinase.</title>
        <authorList>
            <person name="Tokumitsu H."/>
            <person name="Enslen H."/>
            <person name="Soderling T.R."/>
        </authorList>
    </citation>
    <scope>NUCLEOTIDE SEQUENCE [MRNA]</scope>
    <scope>PROTEIN SEQUENCE OF 214-230 AND 291-310</scope>
    <scope>FUNCTION</scope>
    <scope>ACTIVITY REGULATION</scope>
    <scope>INTERACTION WITH CALMODULIN</scope>
    <scope>TISSUE SPECIFICITY</scope>
    <source>
        <tissue>Brain</tissue>
    </source>
</reference>
<reference key="2">
    <citation type="journal article" date="1996" name="J. Biochem.">
        <title>Evidence for the existence of Ca2+/calmodulin-dependent protein kinase IV kinase isoforms in rat brain.</title>
        <authorList>
            <person name="Okuno S."/>
            <person name="Kitani T."/>
            <person name="Fujisawa H."/>
        </authorList>
    </citation>
    <scope>NUCLEOTIDE SEQUENCE [MRNA]</scope>
    <source>
        <tissue>Brain</tissue>
    </source>
</reference>
<reference key="3">
    <citation type="journal article" date="1996" name="J. Biol. Chem.">
        <title>Multiple Ca(2+)-calmodulin-dependent protein kinase kinases from rat brain. Purification, regulation by Ca(2+)-calmodulin, and partial amino acid sequence.</title>
        <authorList>
            <person name="Edelman A.M."/>
            <person name="Mitchelhill K.I."/>
            <person name="Selbert M.A."/>
            <person name="Anderson K.A."/>
            <person name="Hook S.S."/>
            <person name="Stapleton D."/>
            <person name="Goldstein E.G."/>
            <person name="Means A.R."/>
            <person name="Kemp B.E."/>
        </authorList>
    </citation>
    <scope>PROTEIN SEQUENCE OF 4-13; 20-38; 50-60; 137-148; 196-210; 275-288; 291-311; 333-340; 351-360; 365-382; 389-397; 405-408; 440-444; 458-468 AND 473-478</scope>
    <scope>FUNCTION IN PHOSPHORYLATION OF CAMK1 AND CAMK4</scope>
    <scope>AUTOPHOSPHORYLATION</scope>
</reference>
<reference key="4">
    <citation type="journal article" date="1996" name="Neurosci. Lett.">
        <title>Distribution of Ca2+/calmodulin-dependent protein kinase kinase alpha in the rat central nervous system: an immunohistochemical study.</title>
        <authorList>
            <person name="Nakamura Y."/>
            <person name="Okuno S."/>
            <person name="Kitani T."/>
            <person name="Otake K."/>
            <person name="Sato F."/>
            <person name="Fujisawa H."/>
        </authorList>
    </citation>
    <scope>SUBCELLULAR LOCATION</scope>
</reference>
<reference key="5">
    <citation type="journal article" date="1997" name="Biochemistry">
        <title>Calcium/calmodulin-dependent protein kinase kinase: identification of regulatory domains.</title>
        <authorList>
            <person name="Tokumitsu H."/>
            <person name="Wayman G.A."/>
            <person name="Muramatsu M.-A."/>
            <person name="Soderling T.R."/>
        </authorList>
    </citation>
    <scope>CHARACTERIZATION</scope>
    <scope>REGION</scope>
</reference>
<reference key="6">
    <citation type="journal article" date="1997" name="J. Biol. Chem.">
        <title>Inhibitory cross-talk by cAMP kinase on the calmodulin-dependent protein kinase cascade.</title>
        <authorList>
            <person name="Wayman G.A."/>
            <person name="Tokumitsu H."/>
            <person name="Soderling T.R."/>
        </authorList>
    </citation>
    <scope>PHOSPHORYLATION AT THR-108 AND SER-458</scope>
    <scope>MUTAGENESIS OF THR-108 AND SER-458</scope>
    <scope>PHOSPHORYLATION BY PRCAKA</scope>
</reference>
<reference key="7">
    <citation type="journal article" date="1998" name="Nature">
        <title>Calcium promotes cell survival through CaM-K kinase activation of the protein-kinase-B pathway.</title>
        <authorList>
            <person name="Yano S."/>
            <person name="Tokumitsu H."/>
            <person name="Soderling T.R."/>
        </authorList>
    </citation>
    <scope>FUNCTION IN PHOSPHORYLATION OF AKT1</scope>
</reference>
<reference key="8">
    <citation type="journal article" date="1999" name="J. Biol. Chem.">
        <title>Inhibition of the Ca2+/calmodulin-dependent protein kinase I cascade by cAMP-dependent protein kinase.</title>
        <authorList>
            <person name="Matsushita M."/>
            <person name="Nairn A.C."/>
        </authorList>
    </citation>
    <scope>PHOSPHORYLATION AT SER-74 AND THR-108</scope>
    <scope>MUTAGENESIS OF SER-74 AND THR-108</scope>
    <scope>PHOSPHORYLATION BY PRCAKA</scope>
    <scope>TISSUE SPECIFICITY</scope>
</reference>
<reference key="9">
    <citation type="journal article" date="1999" name="J. Biol. Chem.">
        <title>Substrate recognition by Ca2+/Calmodulin-dependent protein kinase kinase. Role of the arg-pro-rich insert domain.</title>
        <authorList>
            <person name="Tokumitsu H."/>
            <person name="Takahashi N."/>
            <person name="Eto K."/>
            <person name="Yano S."/>
            <person name="Soderling T.R."/>
            <person name="Muramatsu M.-A."/>
        </authorList>
    </citation>
    <scope>MUTAGENESIS OF ARG-172 AND ARG-177</scope>
    <scope>DOMAIN RP</scope>
    <scope>INTERACTION WITH CAMK4</scope>
</reference>
<reference key="10">
    <citation type="journal article" date="2000" name="Eur. J. Neurosci.">
        <title>Distinct immunohistochemical localization of two isoforms of Ca2+/calmodulin-dependent protein kinase kinases in the adult rat brain.</title>
        <authorList>
            <person name="Sakagami H."/>
            <person name="Umemiya M."/>
            <person name="Saito S."/>
            <person name="Kondo H."/>
        </authorList>
    </citation>
    <scope>SUBCELLULAR LOCATION</scope>
</reference>
<reference key="11">
    <citation type="journal article" date="2012" name="Nat. Commun.">
        <title>Quantitative maps of protein phosphorylation sites across 14 different rat organs and tissues.</title>
        <authorList>
            <person name="Lundby A."/>
            <person name="Secher A."/>
            <person name="Lage K."/>
            <person name="Nordsborg N.B."/>
            <person name="Dmytriyev A."/>
            <person name="Lundby C."/>
            <person name="Olsen J.V."/>
        </authorList>
    </citation>
    <scope>PHOSPHORYLATION [LARGE SCALE ANALYSIS] AT SER-458 AND SER-475</scope>
    <scope>IDENTIFICATION BY MASS SPECTROMETRY [LARGE SCALE ANALYSIS]</scope>
</reference>
<reference key="12">
    <citation type="journal article" date="1999" name="Nat. Struct. Biol.">
        <title>A novel target recognition revealed by calmodulin in complex with Ca2+-calmodulin-dependent kinase kinase.</title>
        <authorList>
            <person name="Osawa M."/>
            <person name="Tokumitsu H."/>
            <person name="Swindells M.B."/>
            <person name="Kurihara H."/>
            <person name="Orita M."/>
            <person name="Shibanuma T."/>
            <person name="Furuya T."/>
            <person name="Ikura M."/>
        </authorList>
    </citation>
    <scope>STRUCTURE BY NMR OF 438-463 IN COMPLEX WITH CA(2+)/CALMODULIN</scope>
    <scope>MUTAGENESIS OF PHE-459 AND PHE-463</scope>
    <scope>REGION</scope>
</reference>
<feature type="chain" id="PRO_0000086143" description="Calcium/calmodulin-dependent protein kinase kinase 1">
    <location>
        <begin position="1"/>
        <end position="505"/>
    </location>
</feature>
<feature type="domain" description="Protein kinase" evidence="3">
    <location>
        <begin position="128"/>
        <end position="409"/>
    </location>
</feature>
<feature type="region of interest" description="Disordered" evidence="5">
    <location>
        <begin position="27"/>
        <end position="66"/>
    </location>
</feature>
<feature type="region of interest" description="RP domain" evidence="7">
    <location>
        <begin position="167"/>
        <end position="189"/>
    </location>
</feature>
<feature type="region of interest" description="Autoinhibitory domain" evidence="7 12">
    <location>
        <begin position="435"/>
        <end position="440"/>
    </location>
</feature>
<feature type="region of interest" description="Calmodulin-binding" evidence="8 12">
    <location>
        <begin position="438"/>
        <end position="463"/>
    </location>
</feature>
<feature type="region of interest" description="Disordered" evidence="5">
    <location>
        <begin position="460"/>
        <end position="505"/>
    </location>
</feature>
<feature type="active site" description="Proton acceptor" evidence="3 4">
    <location>
        <position position="275"/>
    </location>
</feature>
<feature type="binding site" evidence="3">
    <location>
        <begin position="134"/>
        <end position="142"/>
    </location>
    <ligand>
        <name>ATP</name>
        <dbReference type="ChEBI" id="CHEBI:30616"/>
    </ligand>
</feature>
<feature type="binding site" evidence="3">
    <location>
        <position position="157"/>
    </location>
    <ligand>
        <name>ATP</name>
        <dbReference type="ChEBI" id="CHEBI:30616"/>
    </ligand>
</feature>
<feature type="modified residue" description="Phosphoserine" evidence="1">
    <location>
        <position position="67"/>
    </location>
</feature>
<feature type="modified residue" description="Phosphoserine" evidence="6">
    <location>
        <position position="74"/>
    </location>
</feature>
<feature type="modified residue" description="Asymmetric dimethylarginine" evidence="2">
    <location>
        <position position="78"/>
    </location>
</feature>
<feature type="modified residue" description="Phosphoserine" evidence="2">
    <location>
        <position position="100"/>
    </location>
</feature>
<feature type="modified residue" description="Phosphothreonine" evidence="6 11">
    <location>
        <position position="108"/>
    </location>
</feature>
<feature type="modified residue" description="Phosphoserine" evidence="11 15">
    <location>
        <position position="458"/>
    </location>
</feature>
<feature type="modified residue" description="Phosphoserine" evidence="15">
    <location>
        <position position="475"/>
    </location>
</feature>
<feature type="modified residue" description="Phosphoserine" evidence="1">
    <location>
        <position position="492"/>
    </location>
</feature>
<feature type="mutagenesis site" description="Decrease in phosphorylation by PKA." evidence="6">
    <original>S</original>
    <variation>A</variation>
    <location>
        <position position="74"/>
    </location>
</feature>
<feature type="mutagenesis site" description="Decrease in phosphorylation and partial inhibition by PKA. Almost loss of inhibition by PKA; when associated with A-458." evidence="6 11">
    <original>T</original>
    <variation>A</variation>
    <location>
        <position position="108"/>
    </location>
</feature>
<feature type="mutagenesis site" description="Loss of substrate recognition and interaction with CAMK4." evidence="7">
    <original>R</original>
    <variation>E</variation>
    <location>
        <position position="172"/>
    </location>
</feature>
<feature type="mutagenesis site" description="Loss of substrate recognition and interaction with CAMK4." evidence="7">
    <original>R</original>
    <variation>E</variation>
    <location>
        <position position="177"/>
    </location>
</feature>
<feature type="mutagenesis site" description="Decrease in phosphorylation and partial inhibition by PKA. Almost loss of inhibition by PKA; when associated with A-108." evidence="11">
    <original>S</original>
    <variation>A</variation>
    <location>
        <position position="458"/>
    </location>
</feature>
<feature type="mutagenesis site" description="Loss of binding to Ca(2+)/calmodulin." evidence="8">
    <original>F</original>
    <variation>D</variation>
    <location>
        <position position="459"/>
    </location>
</feature>
<feature type="mutagenesis site" description="Loss of binding to Ca(2+)/calmodulin." evidence="8">
    <original>F</original>
    <variation>D</variation>
    <location>
        <position position="463"/>
    </location>
</feature>
<feature type="sequence conflict" description="In Ref. 1; AAC42070." evidence="14" ref="1">
    <original>P</original>
    <variation>S</variation>
    <location>
        <position position="45"/>
    </location>
</feature>
<feature type="sequence conflict" description="In Ref. 1; AAC42070." evidence="14" ref="1">
    <original>G</original>
    <variation>E</variation>
    <location>
        <position position="81"/>
    </location>
</feature>
<feature type="helix" evidence="16">
    <location>
        <begin position="444"/>
        <end position="453"/>
    </location>
</feature>
<feature type="strand" evidence="16">
    <location>
        <begin position="455"/>
        <end position="457"/>
    </location>
</feature>
<name>KKCC1_RAT</name>
<comment type="function">
    <text evidence="9 10 13">Calcium/calmodulin-dependent protein kinase that belongs to a proposed calcium-triggered signaling cascade involved in a number of cellular processes. Phosphorylates CAMK1, CAMK1D, CAMK1G and CAMK4. Involved in regulating cell apoptosis. Promotes cell survival by phosphorylating AKT1/PKB that inhibits pro-apoptotic BAD/Bcl2-antagonist of cell death.</text>
</comment>
<comment type="catalytic activity">
    <reaction>
        <text>L-seryl-[protein] + ATP = O-phospho-L-seryl-[protein] + ADP + H(+)</text>
        <dbReference type="Rhea" id="RHEA:17989"/>
        <dbReference type="Rhea" id="RHEA-COMP:9863"/>
        <dbReference type="Rhea" id="RHEA-COMP:11604"/>
        <dbReference type="ChEBI" id="CHEBI:15378"/>
        <dbReference type="ChEBI" id="CHEBI:29999"/>
        <dbReference type="ChEBI" id="CHEBI:30616"/>
        <dbReference type="ChEBI" id="CHEBI:83421"/>
        <dbReference type="ChEBI" id="CHEBI:456216"/>
        <dbReference type="EC" id="2.7.11.17"/>
    </reaction>
</comment>
<comment type="catalytic activity">
    <reaction>
        <text>L-threonyl-[protein] + ATP = O-phospho-L-threonyl-[protein] + ADP + H(+)</text>
        <dbReference type="Rhea" id="RHEA:46608"/>
        <dbReference type="Rhea" id="RHEA-COMP:11060"/>
        <dbReference type="Rhea" id="RHEA-COMP:11605"/>
        <dbReference type="ChEBI" id="CHEBI:15378"/>
        <dbReference type="ChEBI" id="CHEBI:30013"/>
        <dbReference type="ChEBI" id="CHEBI:30616"/>
        <dbReference type="ChEBI" id="CHEBI:61977"/>
        <dbReference type="ChEBI" id="CHEBI:456216"/>
        <dbReference type="EC" id="2.7.11.17"/>
    </reaction>
</comment>
<comment type="activity regulation">
    <text evidence="9">Activated by Ca(2+)/calmodulin. Binding of calmodulin may relieve intrasteric autoinhibition. Partially inhibited upon phosphorylation by PRCAKA/PKA. May be regulated through phosphorylation by CAMK1 and CAMK4.</text>
</comment>
<comment type="subunit">
    <text evidence="7 8 9">Interacts with CAMK4 and calmodulin.</text>
</comment>
<comment type="subcellular location">
    <subcellularLocation>
        <location>Cytoplasm</location>
    </subcellularLocation>
    <subcellularLocation>
        <location>Nucleus</location>
    </subcellularLocation>
</comment>
<comment type="tissue specificity">
    <text evidence="6 9">Mostly expressed in the brain with higher levels in cortex and hippocampus. Lower expression levels were detected in striatum, nucleus accumbens and cerebellum (at protein level). Abundant in forebrain, weaker in cerebellum and also detected in thymus and spleen.</text>
</comment>
<comment type="domain">
    <text evidence="7">The autoinhibitory domain overlaps with the calmodulin binding region and may be involved in intrasteric autoinhibition.</text>
</comment>
<comment type="domain">
    <text evidence="7">The RP domain (arginine/proline-rich) is involved in the recognition of CAMKI and CAMK4 as substrates.</text>
</comment>
<comment type="PTM">
    <text evidence="6 11">Appears to be autophosphorylated. Phosphorylated at multiple sites by PRCAKA/PKA. Phosphorylation of Ser-458 is blocked upon binding to Ca(2+)/calmodulin. May be phosphorylated by CAMK1 and CAMK4.</text>
</comment>
<comment type="similarity">
    <text evidence="3">Belongs to the protein kinase superfamily. Ser/Thr protein kinase family.</text>
</comment>
<sequence length="505" mass="55908">MERSPAVCCQDPRAELVERVAAISVAHLEEAEEGPEPASNGVDPPPRARAASVIPGSASRPTPVRPSLSARKFSLQERPAGSCLEAQVGPYSTGPASHMSPRAWRRPTIESHHVAISDTEDCVQLNQYKLQSEIGKGAYGVVRLAYNEREDRHYAMKVLSKKKLLKQYGFPRRPPPRGSQAPQGGPAKQLLPLERVYQEIAILKKLDHVNVVKLIEVLDDPAEDNLYLVFDLLRKGPVMEVPCDKPFPEEQARLYLRDIILGLEYLHCQKIVHRDIKPSNLLLGDDGHVKIADFGVSNQFEGNDAQLSSTAGTPAFMAPEAISDTGQSFSGKALDVWATGVTLYCFVYGKCPFIDEYILALHRKIKNEAVVFPEEPEVSEELKDLILKMLDKNPETRIGVSDIKLHPWVTKHGEEPLPSEEEHCSVVEVTEEEVKNSVKLIPSWTTVILVKSMLRKRSFGNPFEPQARREERSMSAPGNLLLKEGCGEGGKSPELPGVQEDEAAS</sequence>
<gene>
    <name type="primary">Camkk1</name>
</gene>
<accession>P97756</accession>
<accession>Q64572</accession>
<accession>Q794E3</accession>